<protein>
    <recommendedName>
        <fullName evidence="1">tRNA uridine 5-carboxymethylaminomethyl modification enzyme MnmG</fullName>
    </recommendedName>
    <alternativeName>
        <fullName evidence="1">Glucose-inhibited division protein A</fullName>
    </alternativeName>
</protein>
<organism>
    <name type="scientific">Lachnoclostridium phytofermentans (strain ATCC 700394 / DSM 18823 / ISDg)</name>
    <name type="common">Clostridium phytofermentans</name>
    <dbReference type="NCBI Taxonomy" id="357809"/>
    <lineage>
        <taxon>Bacteria</taxon>
        <taxon>Bacillati</taxon>
        <taxon>Bacillota</taxon>
        <taxon>Clostridia</taxon>
        <taxon>Lachnospirales</taxon>
        <taxon>Lachnospiraceae</taxon>
    </lineage>
</organism>
<reference key="1">
    <citation type="submission" date="2007-11" db="EMBL/GenBank/DDBJ databases">
        <title>Complete genome sequence of Clostridium phytofermentans ISDg.</title>
        <authorList>
            <person name="Leschine S.B."/>
            <person name="Warnick T.A."/>
            <person name="Blanchard J.L."/>
            <person name="Schnell D.J."/>
            <person name="Petit E.L."/>
            <person name="LaTouf W.G."/>
            <person name="Copeland A."/>
            <person name="Lucas S."/>
            <person name="Lapidus A."/>
            <person name="Barry K."/>
            <person name="Glavina del Rio T."/>
            <person name="Dalin E."/>
            <person name="Tice H."/>
            <person name="Pitluck S."/>
            <person name="Kiss H."/>
            <person name="Brettin T."/>
            <person name="Bruce D."/>
            <person name="Detter J.C."/>
            <person name="Han C."/>
            <person name="Kuske C."/>
            <person name="Schmutz J."/>
            <person name="Larimer F."/>
            <person name="Land M."/>
            <person name="Hauser L."/>
            <person name="Kyrpides N."/>
            <person name="Kim E.A."/>
            <person name="Richardson P."/>
        </authorList>
    </citation>
    <scope>NUCLEOTIDE SEQUENCE [LARGE SCALE GENOMIC DNA]</scope>
    <source>
        <strain>ATCC 700394 / DSM 18823 / ISDg</strain>
    </source>
</reference>
<accession>A9KLX8</accession>
<feature type="chain" id="PRO_1000076313" description="tRNA uridine 5-carboxymethylaminomethyl modification enzyme MnmG">
    <location>
        <begin position="1"/>
        <end position="627"/>
    </location>
</feature>
<feature type="binding site" evidence="1">
    <location>
        <begin position="14"/>
        <end position="19"/>
    </location>
    <ligand>
        <name>FAD</name>
        <dbReference type="ChEBI" id="CHEBI:57692"/>
    </ligand>
</feature>
<feature type="binding site" evidence="1">
    <location>
        <begin position="275"/>
        <end position="289"/>
    </location>
    <ligand>
        <name>NAD(+)</name>
        <dbReference type="ChEBI" id="CHEBI:57540"/>
    </ligand>
</feature>
<gene>
    <name evidence="1" type="primary">mnmG</name>
    <name evidence="1" type="synonym">gidA</name>
    <name type="ordered locus">Cphy_3940</name>
</gene>
<evidence type="ECO:0000255" key="1">
    <source>
        <dbReference type="HAMAP-Rule" id="MF_00129"/>
    </source>
</evidence>
<name>MNMG_LACP7</name>
<comment type="function">
    <text evidence="1">NAD-binding protein involved in the addition of a carboxymethylaminomethyl (cmnm) group at the wobble position (U34) of certain tRNAs, forming tRNA-cmnm(5)s(2)U34.</text>
</comment>
<comment type="cofactor">
    <cofactor evidence="1">
        <name>FAD</name>
        <dbReference type="ChEBI" id="CHEBI:57692"/>
    </cofactor>
</comment>
<comment type="subunit">
    <text evidence="1">Homodimer. Heterotetramer of two MnmE and two MnmG subunits.</text>
</comment>
<comment type="subcellular location">
    <subcellularLocation>
        <location evidence="1">Cytoplasm</location>
    </subcellularLocation>
</comment>
<comment type="similarity">
    <text evidence="1">Belongs to the MnmG family.</text>
</comment>
<dbReference type="EMBL" id="CP000885">
    <property type="protein sequence ID" value="ABX44287.1"/>
    <property type="molecule type" value="Genomic_DNA"/>
</dbReference>
<dbReference type="RefSeq" id="WP_012201934.1">
    <property type="nucleotide sequence ID" value="NC_010001.1"/>
</dbReference>
<dbReference type="SMR" id="A9KLX8"/>
<dbReference type="STRING" id="357809.Cphy_3940"/>
<dbReference type="KEGG" id="cpy:Cphy_3940"/>
<dbReference type="eggNOG" id="COG0445">
    <property type="taxonomic scope" value="Bacteria"/>
</dbReference>
<dbReference type="HOGENOM" id="CLU_007831_2_2_9"/>
<dbReference type="Proteomes" id="UP000000370">
    <property type="component" value="Chromosome"/>
</dbReference>
<dbReference type="GO" id="GO:0005829">
    <property type="term" value="C:cytosol"/>
    <property type="evidence" value="ECO:0007669"/>
    <property type="project" value="TreeGrafter"/>
</dbReference>
<dbReference type="GO" id="GO:0050660">
    <property type="term" value="F:flavin adenine dinucleotide binding"/>
    <property type="evidence" value="ECO:0007669"/>
    <property type="project" value="UniProtKB-UniRule"/>
</dbReference>
<dbReference type="GO" id="GO:0030488">
    <property type="term" value="P:tRNA methylation"/>
    <property type="evidence" value="ECO:0007669"/>
    <property type="project" value="TreeGrafter"/>
</dbReference>
<dbReference type="GO" id="GO:0002098">
    <property type="term" value="P:tRNA wobble uridine modification"/>
    <property type="evidence" value="ECO:0007669"/>
    <property type="project" value="InterPro"/>
</dbReference>
<dbReference type="FunFam" id="1.10.10.1800:FF:000001">
    <property type="entry name" value="tRNA uridine 5-carboxymethylaminomethyl modification enzyme MnmG"/>
    <property type="match status" value="1"/>
</dbReference>
<dbReference type="FunFam" id="1.10.150.570:FF:000001">
    <property type="entry name" value="tRNA uridine 5-carboxymethylaminomethyl modification enzyme MnmG"/>
    <property type="match status" value="1"/>
</dbReference>
<dbReference type="FunFam" id="3.50.50.60:FF:000002">
    <property type="entry name" value="tRNA uridine 5-carboxymethylaminomethyl modification enzyme MnmG"/>
    <property type="match status" value="1"/>
</dbReference>
<dbReference type="Gene3D" id="3.50.50.60">
    <property type="entry name" value="FAD/NAD(P)-binding domain"/>
    <property type="match status" value="2"/>
</dbReference>
<dbReference type="Gene3D" id="1.10.150.570">
    <property type="entry name" value="GidA associated domain, C-terminal subdomain"/>
    <property type="match status" value="1"/>
</dbReference>
<dbReference type="Gene3D" id="1.10.10.1800">
    <property type="entry name" value="tRNA uridine 5-carboxymethylaminomethyl modification enzyme MnmG/GidA"/>
    <property type="match status" value="1"/>
</dbReference>
<dbReference type="HAMAP" id="MF_00129">
    <property type="entry name" value="MnmG_GidA"/>
    <property type="match status" value="1"/>
</dbReference>
<dbReference type="InterPro" id="IPR036188">
    <property type="entry name" value="FAD/NAD-bd_sf"/>
</dbReference>
<dbReference type="InterPro" id="IPR049312">
    <property type="entry name" value="GIDA_C_N"/>
</dbReference>
<dbReference type="InterPro" id="IPR004416">
    <property type="entry name" value="MnmG"/>
</dbReference>
<dbReference type="InterPro" id="IPR002218">
    <property type="entry name" value="MnmG-rel"/>
</dbReference>
<dbReference type="InterPro" id="IPR020595">
    <property type="entry name" value="MnmG-rel_CS"/>
</dbReference>
<dbReference type="InterPro" id="IPR026904">
    <property type="entry name" value="MnmG_C"/>
</dbReference>
<dbReference type="InterPro" id="IPR047001">
    <property type="entry name" value="MnmG_C_subdom"/>
</dbReference>
<dbReference type="InterPro" id="IPR044920">
    <property type="entry name" value="MnmG_C_subdom_sf"/>
</dbReference>
<dbReference type="InterPro" id="IPR040131">
    <property type="entry name" value="MnmG_N"/>
</dbReference>
<dbReference type="NCBIfam" id="TIGR00136">
    <property type="entry name" value="mnmG_gidA"/>
    <property type="match status" value="1"/>
</dbReference>
<dbReference type="PANTHER" id="PTHR11806">
    <property type="entry name" value="GLUCOSE INHIBITED DIVISION PROTEIN A"/>
    <property type="match status" value="1"/>
</dbReference>
<dbReference type="PANTHER" id="PTHR11806:SF0">
    <property type="entry name" value="PROTEIN MTO1 HOMOLOG, MITOCHONDRIAL"/>
    <property type="match status" value="1"/>
</dbReference>
<dbReference type="Pfam" id="PF01134">
    <property type="entry name" value="GIDA"/>
    <property type="match status" value="1"/>
</dbReference>
<dbReference type="Pfam" id="PF21680">
    <property type="entry name" value="GIDA_C_1st"/>
    <property type="match status" value="1"/>
</dbReference>
<dbReference type="Pfam" id="PF13932">
    <property type="entry name" value="SAM_GIDA_C"/>
    <property type="match status" value="1"/>
</dbReference>
<dbReference type="SMART" id="SM01228">
    <property type="entry name" value="GIDA_assoc_3"/>
    <property type="match status" value="1"/>
</dbReference>
<dbReference type="SUPFAM" id="SSF51905">
    <property type="entry name" value="FAD/NAD(P)-binding domain"/>
    <property type="match status" value="1"/>
</dbReference>
<dbReference type="PROSITE" id="PS01280">
    <property type="entry name" value="GIDA_1"/>
    <property type="match status" value="1"/>
</dbReference>
<sequence>MTNLYEAYDVVVVGAGHAGCEAALACARLGFNTIMLTVSMDNIALMPCNPNIGGTSKGHLVREIDALGGEMGKNIDKTYIQSKMLNQSKGPAVHSLRAQADKMDYCREMRKVVENTDNLTLRQDEVIDILTENNEVTGVKVYSGGVYPCKVVILCTGVYLNARCIYGETSHYTGPNGLPSANHLTESLKKLGIEMYRFKTGTPARIDKRSIDFSKMEEQFGDEKVVPFSFINNPEDIEKEQISCWLTYTNENTHDIIRDNIHRSPLYSGNIKGTGPRYCPSIEDKVVKFPDKDRHQVFIEPEGNYTNEMYISGMSSSLPEDVQFKMYRSVSGLENAKIVRNAYAIEYDCINPMQLKSSLEFMSINGLFSGGQFNGSSGYEEAAAQGLMAGINAARKLSGKEPIVLDRSQAYIGVLIDDLVTKETHEPYRMMTSRAEYRLILRQDNADQRLTRIGHEIGLISEDRYEHLIDKERMIKEEMMRLENSLIGASKEVQEILEGLGTTTLKTGTTLAELVRRPELTYAALAPLDKNREPLPEEVITQVEINFKYDGYIKRQEHQVEQFKKLEGKKIPEDLDYSDVPSLRIEAKQKLNQIKPSSVGQASRISGVSPADISVLLVYLEQIRRKK</sequence>
<keyword id="KW-0963">Cytoplasm</keyword>
<keyword id="KW-0274">FAD</keyword>
<keyword id="KW-0285">Flavoprotein</keyword>
<keyword id="KW-0520">NAD</keyword>
<keyword id="KW-1185">Reference proteome</keyword>
<keyword id="KW-0819">tRNA processing</keyword>
<proteinExistence type="inferred from homology"/>